<reference key="1">
    <citation type="journal article" date="2009" name="PLoS Genet.">
        <title>Organised genome dynamics in the Escherichia coli species results in highly diverse adaptive paths.</title>
        <authorList>
            <person name="Touchon M."/>
            <person name="Hoede C."/>
            <person name="Tenaillon O."/>
            <person name="Barbe V."/>
            <person name="Baeriswyl S."/>
            <person name="Bidet P."/>
            <person name="Bingen E."/>
            <person name="Bonacorsi S."/>
            <person name="Bouchier C."/>
            <person name="Bouvet O."/>
            <person name="Calteau A."/>
            <person name="Chiapello H."/>
            <person name="Clermont O."/>
            <person name="Cruveiller S."/>
            <person name="Danchin A."/>
            <person name="Diard M."/>
            <person name="Dossat C."/>
            <person name="Karoui M.E."/>
            <person name="Frapy E."/>
            <person name="Garry L."/>
            <person name="Ghigo J.M."/>
            <person name="Gilles A.M."/>
            <person name="Johnson J."/>
            <person name="Le Bouguenec C."/>
            <person name="Lescat M."/>
            <person name="Mangenot S."/>
            <person name="Martinez-Jehanne V."/>
            <person name="Matic I."/>
            <person name="Nassif X."/>
            <person name="Oztas S."/>
            <person name="Petit M.A."/>
            <person name="Pichon C."/>
            <person name="Rouy Z."/>
            <person name="Ruf C.S."/>
            <person name="Schneider D."/>
            <person name="Tourret J."/>
            <person name="Vacherie B."/>
            <person name="Vallenet D."/>
            <person name="Medigue C."/>
            <person name="Rocha E.P.C."/>
            <person name="Denamur E."/>
        </authorList>
    </citation>
    <scope>NUCLEOTIDE SEQUENCE [LARGE SCALE GENOMIC DNA]</scope>
    <source>
        <strain>S88 / ExPEC</strain>
    </source>
</reference>
<keyword id="KW-0378">Hydrolase</keyword>
<keyword id="KW-1185">Reference proteome</keyword>
<organism>
    <name type="scientific">Escherichia coli O45:K1 (strain S88 / ExPEC)</name>
    <dbReference type="NCBI Taxonomy" id="585035"/>
    <lineage>
        <taxon>Bacteria</taxon>
        <taxon>Pseudomonadati</taxon>
        <taxon>Pseudomonadota</taxon>
        <taxon>Gammaproteobacteria</taxon>
        <taxon>Enterobacterales</taxon>
        <taxon>Enterobacteriaceae</taxon>
        <taxon>Escherichia</taxon>
    </lineage>
</organism>
<dbReference type="EC" id="3.6.1.40" evidence="1"/>
<dbReference type="EMBL" id="CU928161">
    <property type="protein sequence ID" value="CAR05397.1"/>
    <property type="molecule type" value="Genomic_DNA"/>
</dbReference>
<dbReference type="RefSeq" id="WP_001314257.1">
    <property type="nucleotide sequence ID" value="NC_011742.1"/>
</dbReference>
<dbReference type="SMR" id="B7MGI9"/>
<dbReference type="KEGG" id="ecz:ECS88_4200"/>
<dbReference type="HOGENOM" id="CLU_025908_4_0_6"/>
<dbReference type="UniPathway" id="UPA00908">
    <property type="reaction ID" value="UER00885"/>
</dbReference>
<dbReference type="Proteomes" id="UP000000747">
    <property type="component" value="Chromosome"/>
</dbReference>
<dbReference type="GO" id="GO:0008894">
    <property type="term" value="F:guanosine-5'-triphosphate,3'-diphosphate diphosphatase activity"/>
    <property type="evidence" value="ECO:0007669"/>
    <property type="project" value="UniProtKB-UniRule"/>
</dbReference>
<dbReference type="GO" id="GO:0015974">
    <property type="term" value="P:guanosine pentaphosphate catabolic process"/>
    <property type="evidence" value="ECO:0007669"/>
    <property type="project" value="InterPro"/>
</dbReference>
<dbReference type="GO" id="GO:0015970">
    <property type="term" value="P:guanosine tetraphosphate biosynthetic process"/>
    <property type="evidence" value="ECO:0007669"/>
    <property type="project" value="UniProtKB-UniRule"/>
</dbReference>
<dbReference type="GO" id="GO:0015949">
    <property type="term" value="P:nucleobase-containing small molecule interconversion"/>
    <property type="evidence" value="ECO:0007669"/>
    <property type="project" value="TreeGrafter"/>
</dbReference>
<dbReference type="CDD" id="cd24117">
    <property type="entry name" value="ASKHA_NBD_EcGppA-like"/>
    <property type="match status" value="1"/>
</dbReference>
<dbReference type="FunFam" id="1.10.3210.10:FF:000004">
    <property type="entry name" value="Guanosine-5'-triphosphate,3'-diphosphate pyrophosphatase"/>
    <property type="match status" value="1"/>
</dbReference>
<dbReference type="FunFam" id="3.30.420.150:FF:000001">
    <property type="entry name" value="Guanosine-5'-triphosphate,3'-diphosphate pyrophosphatase"/>
    <property type="match status" value="1"/>
</dbReference>
<dbReference type="FunFam" id="3.30.420.40:FF:000023">
    <property type="entry name" value="Guanosine-5'-triphosphate,3'-diphosphate pyrophosphatase"/>
    <property type="match status" value="1"/>
</dbReference>
<dbReference type="Gene3D" id="3.30.420.40">
    <property type="match status" value="1"/>
</dbReference>
<dbReference type="Gene3D" id="3.30.420.150">
    <property type="entry name" value="Exopolyphosphatase. Domain 2"/>
    <property type="match status" value="1"/>
</dbReference>
<dbReference type="Gene3D" id="1.10.3210.10">
    <property type="entry name" value="Hypothetical protein af1432"/>
    <property type="match status" value="1"/>
</dbReference>
<dbReference type="HAMAP" id="MF_01550">
    <property type="entry name" value="GppA"/>
    <property type="match status" value="1"/>
</dbReference>
<dbReference type="InterPro" id="IPR043129">
    <property type="entry name" value="ATPase_NBD"/>
</dbReference>
<dbReference type="InterPro" id="IPR050273">
    <property type="entry name" value="GppA/Ppx_hydrolase"/>
</dbReference>
<dbReference type="InterPro" id="IPR023709">
    <property type="entry name" value="Guo-5TP_3DP_PyrP"/>
</dbReference>
<dbReference type="InterPro" id="IPR048950">
    <property type="entry name" value="Ppx_GppA_C"/>
</dbReference>
<dbReference type="InterPro" id="IPR003695">
    <property type="entry name" value="Ppx_GppA_N"/>
</dbReference>
<dbReference type="InterPro" id="IPR030673">
    <property type="entry name" value="PyroPPase_GppA_Ppx"/>
</dbReference>
<dbReference type="NCBIfam" id="NF008260">
    <property type="entry name" value="PRK11031.1"/>
    <property type="match status" value="1"/>
</dbReference>
<dbReference type="PANTHER" id="PTHR30005">
    <property type="entry name" value="EXOPOLYPHOSPHATASE"/>
    <property type="match status" value="1"/>
</dbReference>
<dbReference type="PANTHER" id="PTHR30005:SF0">
    <property type="entry name" value="RETROGRADE REGULATION PROTEIN 2"/>
    <property type="match status" value="1"/>
</dbReference>
<dbReference type="Pfam" id="PF02541">
    <property type="entry name" value="Ppx-GppA"/>
    <property type="match status" value="1"/>
</dbReference>
<dbReference type="Pfam" id="PF21447">
    <property type="entry name" value="Ppx-GppA_III"/>
    <property type="match status" value="1"/>
</dbReference>
<dbReference type="PIRSF" id="PIRSF001267">
    <property type="entry name" value="Pyrophosphatase_GppA_Ppx"/>
    <property type="match status" value="1"/>
</dbReference>
<dbReference type="SUPFAM" id="SSF53067">
    <property type="entry name" value="Actin-like ATPase domain"/>
    <property type="match status" value="2"/>
</dbReference>
<dbReference type="SUPFAM" id="SSF109604">
    <property type="entry name" value="HD-domain/PDEase-like"/>
    <property type="match status" value="1"/>
</dbReference>
<sequence length="494" mass="54945">MGSTSSLYAAIDLGSNSFHMLVVREVAGSIQTLTRIKRKVRLAAGLNSENALSNEAMERGWQCLRLFAERLQDIPPSQIRVVATATLRLAVNAGDFIAKAQEILGCPVQVISGEEEARLIYQGVAHTTGGADQRLVVDIGGASTELVTGTGAQTTSLFSLSMGCVTWLERYFADRNLGQENFDAAEKAAREVLRPVADELRYHGWKVCVGASGTVQALQEIMMAQGMDERITLEKLQQLKQRAIHCGRLEELEIDGLTLERALVFPSGLAILIAIFTELNIQCMTLAGGALREGLVYGMLHLTVEQDIRSRTLRNIQRRFMIDIDQAQRVAKVAANFFDQVENEWHLEAISRDLLISACQLHEIGLSVDFKQAPQHAAYLVRNLDLPGFTPAQKKLLATLLLNQTNPVDLSSLHQQNAVPPRVAEQLCRLLRLAIIFASRRRDDLVPEMTLQANHELLTLTLPQGWLTQHPLGKEIIDQESQWQSYVHWPLEVH</sequence>
<name>GPPA_ECO45</name>
<accession>B7MGI9</accession>
<gene>
    <name evidence="1" type="primary">gppA</name>
    <name type="ordered locus">ECS88_4200</name>
</gene>
<feature type="chain" id="PRO_1000146864" description="Guanosine-5'-triphosphate,3'-diphosphate pyrophosphatase">
    <location>
        <begin position="1"/>
        <end position="494"/>
    </location>
</feature>
<proteinExistence type="inferred from homology"/>
<protein>
    <recommendedName>
        <fullName evidence="1">Guanosine-5'-triphosphate,3'-diphosphate pyrophosphatase</fullName>
        <ecNumber evidence="1">3.6.1.40</ecNumber>
    </recommendedName>
    <alternativeName>
        <fullName evidence="1">Guanosine pentaphosphate phosphohydrolase</fullName>
    </alternativeName>
    <alternativeName>
        <fullName evidence="1">pppGpp-5'-phosphohydrolase</fullName>
    </alternativeName>
</protein>
<comment type="function">
    <text evidence="1">Catalyzes the conversion of pppGpp to ppGpp. Guanosine pentaphosphate (pppGpp) is a cytoplasmic signaling molecule which together with ppGpp controls the 'stringent response', an adaptive process that allows bacteria to respond to amino acid starvation, resulting in the coordinated regulation of numerous cellular activities.</text>
</comment>
<comment type="catalytic activity">
    <reaction evidence="1">
        <text>guanosine 3'-diphosphate 5'-triphosphate + H2O = guanosine 3',5'-bis(diphosphate) + phosphate + H(+)</text>
        <dbReference type="Rhea" id="RHEA:13073"/>
        <dbReference type="ChEBI" id="CHEBI:15377"/>
        <dbReference type="ChEBI" id="CHEBI:15378"/>
        <dbReference type="ChEBI" id="CHEBI:43474"/>
        <dbReference type="ChEBI" id="CHEBI:77828"/>
        <dbReference type="ChEBI" id="CHEBI:142410"/>
        <dbReference type="EC" id="3.6.1.40"/>
    </reaction>
</comment>
<comment type="pathway">
    <text evidence="1">Purine metabolism; ppGpp biosynthesis; ppGpp from GTP: step 2/2.</text>
</comment>
<comment type="similarity">
    <text evidence="1">Belongs to the GppA/Ppx family. GppA subfamily.</text>
</comment>
<evidence type="ECO:0000255" key="1">
    <source>
        <dbReference type="HAMAP-Rule" id="MF_01550"/>
    </source>
</evidence>